<accession>B1L7W6</accession>
<sequence length="640" mass="74484">MKIKVKLPDGKEKEYDRGITPAEIAKELGVKKAIGAVVNGELWDLKRPIENDCELRLVTLEDPEAPEFYRHTMAHILAQAVMRIYGKENVKLGIGPTIENGFYYDFDIKNGRLTEEDLPKIEQEMKKIIKENLPIERKEISKEEARKLFNNQPYKLELIEEIEGDRVTIYRQGEFVDLCRGPHLPSTGIVKHFKLLSVSGAYWRGSEKNPMLTRVYGTAFAKKEDLDNYLKFLEEAQRRDHRKLGPHLELFMLNTEYAPGMPFFLPKGVVVLNELMKFSRELHRERGYQEIFTPLIMNEQLWKISGHWDHYAENMYFIEKDEERYAVKPMNCPGHILVYKSRTVSYRDLPLRFFEFGRVHRYERSGVLHGLMRVRSFTQDDAHIFCTPGQIEEEILGVLDLINTIYSQFGFTYRVELSTMPEDHMGDEAIWEKATTALKNALERAGLSYKVNEGEGAFYGPKIDFHIRDSIGREWQCATIQLDFMMPEKFNVTYIGPDNKEHRAVMIHRAIYGSLERFFGILIEHFAGAFPTWLAPIQVAVIPISEKHNDGAEKIAKRISQEGFRVFFDNRRETLGYRIRQAQTQKIPYMIILGDKELESGKISVRTRTGKEIKDVDLEHFVETLRNEVLSRKLELLMEG</sequence>
<protein>
    <recommendedName>
        <fullName evidence="1">Threonine--tRNA ligase</fullName>
        <ecNumber evidence="1">6.1.1.3</ecNumber>
    </recommendedName>
    <alternativeName>
        <fullName evidence="1">Threonyl-tRNA synthetase</fullName>
        <shortName evidence="1">ThrRS</shortName>
    </alternativeName>
</protein>
<dbReference type="EC" id="6.1.1.3" evidence="1"/>
<dbReference type="EMBL" id="CP000969">
    <property type="protein sequence ID" value="ACB08547.1"/>
    <property type="molecule type" value="Genomic_DNA"/>
</dbReference>
<dbReference type="RefSeq" id="WP_012310374.1">
    <property type="nucleotide sequence ID" value="NC_010483.1"/>
</dbReference>
<dbReference type="SMR" id="B1L7W6"/>
<dbReference type="KEGG" id="trq:TRQ2_0187"/>
<dbReference type="HOGENOM" id="CLU_008554_0_1_0"/>
<dbReference type="Proteomes" id="UP000001687">
    <property type="component" value="Chromosome"/>
</dbReference>
<dbReference type="GO" id="GO:0005737">
    <property type="term" value="C:cytoplasm"/>
    <property type="evidence" value="ECO:0007669"/>
    <property type="project" value="UniProtKB-SubCell"/>
</dbReference>
<dbReference type="GO" id="GO:0005524">
    <property type="term" value="F:ATP binding"/>
    <property type="evidence" value="ECO:0007669"/>
    <property type="project" value="UniProtKB-UniRule"/>
</dbReference>
<dbReference type="GO" id="GO:0046872">
    <property type="term" value="F:metal ion binding"/>
    <property type="evidence" value="ECO:0007669"/>
    <property type="project" value="UniProtKB-KW"/>
</dbReference>
<dbReference type="GO" id="GO:0004829">
    <property type="term" value="F:threonine-tRNA ligase activity"/>
    <property type="evidence" value="ECO:0007669"/>
    <property type="project" value="UniProtKB-UniRule"/>
</dbReference>
<dbReference type="GO" id="GO:0000049">
    <property type="term" value="F:tRNA binding"/>
    <property type="evidence" value="ECO:0007669"/>
    <property type="project" value="UniProtKB-KW"/>
</dbReference>
<dbReference type="GO" id="GO:0006435">
    <property type="term" value="P:threonyl-tRNA aminoacylation"/>
    <property type="evidence" value="ECO:0007669"/>
    <property type="project" value="UniProtKB-UniRule"/>
</dbReference>
<dbReference type="CDD" id="cd01667">
    <property type="entry name" value="TGS_ThrRS"/>
    <property type="match status" value="1"/>
</dbReference>
<dbReference type="CDD" id="cd00860">
    <property type="entry name" value="ThrRS_anticodon"/>
    <property type="match status" value="1"/>
</dbReference>
<dbReference type="CDD" id="cd00771">
    <property type="entry name" value="ThrRS_core"/>
    <property type="match status" value="1"/>
</dbReference>
<dbReference type="FunFam" id="3.30.54.20:FF:000002">
    <property type="entry name" value="Threonine--tRNA ligase"/>
    <property type="match status" value="1"/>
</dbReference>
<dbReference type="FunFam" id="3.30.930.10:FF:000002">
    <property type="entry name" value="Threonine--tRNA ligase"/>
    <property type="match status" value="1"/>
</dbReference>
<dbReference type="FunFam" id="3.40.50.800:FF:000001">
    <property type="entry name" value="Threonine--tRNA ligase"/>
    <property type="match status" value="1"/>
</dbReference>
<dbReference type="FunFam" id="3.30.980.10:FF:000005">
    <property type="entry name" value="Threonyl-tRNA synthetase, mitochondrial"/>
    <property type="match status" value="1"/>
</dbReference>
<dbReference type="Gene3D" id="3.10.20.30">
    <property type="match status" value="1"/>
</dbReference>
<dbReference type="Gene3D" id="3.40.50.800">
    <property type="entry name" value="Anticodon-binding domain"/>
    <property type="match status" value="1"/>
</dbReference>
<dbReference type="Gene3D" id="3.30.930.10">
    <property type="entry name" value="Bira Bifunctional Protein, Domain 2"/>
    <property type="match status" value="1"/>
</dbReference>
<dbReference type="Gene3D" id="3.30.980.10">
    <property type="entry name" value="Threonyl-trna Synthetase, Chain A, domain 2"/>
    <property type="match status" value="1"/>
</dbReference>
<dbReference type="HAMAP" id="MF_00184">
    <property type="entry name" value="Thr_tRNA_synth"/>
    <property type="match status" value="1"/>
</dbReference>
<dbReference type="InterPro" id="IPR002314">
    <property type="entry name" value="aa-tRNA-synt_IIb"/>
</dbReference>
<dbReference type="InterPro" id="IPR006195">
    <property type="entry name" value="aa-tRNA-synth_II"/>
</dbReference>
<dbReference type="InterPro" id="IPR045864">
    <property type="entry name" value="aa-tRNA-synth_II/BPL/LPL"/>
</dbReference>
<dbReference type="InterPro" id="IPR004154">
    <property type="entry name" value="Anticodon-bd"/>
</dbReference>
<dbReference type="InterPro" id="IPR036621">
    <property type="entry name" value="Anticodon-bd_dom_sf"/>
</dbReference>
<dbReference type="InterPro" id="IPR012675">
    <property type="entry name" value="Beta-grasp_dom_sf"/>
</dbReference>
<dbReference type="InterPro" id="IPR004095">
    <property type="entry name" value="TGS"/>
</dbReference>
<dbReference type="InterPro" id="IPR012676">
    <property type="entry name" value="TGS-like"/>
</dbReference>
<dbReference type="InterPro" id="IPR002320">
    <property type="entry name" value="Thr-tRNA-ligase_IIa"/>
</dbReference>
<dbReference type="InterPro" id="IPR018163">
    <property type="entry name" value="Thr/Ala-tRNA-synth_IIc_edit"/>
</dbReference>
<dbReference type="InterPro" id="IPR047246">
    <property type="entry name" value="ThrRS_anticodon"/>
</dbReference>
<dbReference type="InterPro" id="IPR033728">
    <property type="entry name" value="ThrRS_core"/>
</dbReference>
<dbReference type="InterPro" id="IPR012947">
    <property type="entry name" value="tRNA_SAD"/>
</dbReference>
<dbReference type="NCBIfam" id="TIGR00418">
    <property type="entry name" value="thrS"/>
    <property type="match status" value="1"/>
</dbReference>
<dbReference type="PANTHER" id="PTHR11451:SF44">
    <property type="entry name" value="THREONINE--TRNA LIGASE, CHLOROPLASTIC_MITOCHONDRIAL 2"/>
    <property type="match status" value="1"/>
</dbReference>
<dbReference type="PANTHER" id="PTHR11451">
    <property type="entry name" value="THREONINE-TRNA LIGASE"/>
    <property type="match status" value="1"/>
</dbReference>
<dbReference type="Pfam" id="PF03129">
    <property type="entry name" value="HGTP_anticodon"/>
    <property type="match status" value="1"/>
</dbReference>
<dbReference type="Pfam" id="PF02824">
    <property type="entry name" value="TGS"/>
    <property type="match status" value="1"/>
</dbReference>
<dbReference type="Pfam" id="PF00587">
    <property type="entry name" value="tRNA-synt_2b"/>
    <property type="match status" value="1"/>
</dbReference>
<dbReference type="Pfam" id="PF07973">
    <property type="entry name" value="tRNA_SAD"/>
    <property type="match status" value="1"/>
</dbReference>
<dbReference type="PRINTS" id="PR01047">
    <property type="entry name" value="TRNASYNTHTHR"/>
</dbReference>
<dbReference type="SMART" id="SM00863">
    <property type="entry name" value="tRNA_SAD"/>
    <property type="match status" value="1"/>
</dbReference>
<dbReference type="SUPFAM" id="SSF52954">
    <property type="entry name" value="Class II aaRS ABD-related"/>
    <property type="match status" value="1"/>
</dbReference>
<dbReference type="SUPFAM" id="SSF55681">
    <property type="entry name" value="Class II aaRS and biotin synthetases"/>
    <property type="match status" value="1"/>
</dbReference>
<dbReference type="SUPFAM" id="SSF81271">
    <property type="entry name" value="TGS-like"/>
    <property type="match status" value="1"/>
</dbReference>
<dbReference type="SUPFAM" id="SSF55186">
    <property type="entry name" value="ThrRS/AlaRS common domain"/>
    <property type="match status" value="1"/>
</dbReference>
<dbReference type="PROSITE" id="PS50862">
    <property type="entry name" value="AA_TRNA_LIGASE_II"/>
    <property type="match status" value="1"/>
</dbReference>
<dbReference type="PROSITE" id="PS51880">
    <property type="entry name" value="TGS"/>
    <property type="match status" value="1"/>
</dbReference>
<name>SYT_THESQ</name>
<organism>
    <name type="scientific">Thermotoga sp. (strain RQ2)</name>
    <dbReference type="NCBI Taxonomy" id="126740"/>
    <lineage>
        <taxon>Bacteria</taxon>
        <taxon>Thermotogati</taxon>
        <taxon>Thermotogota</taxon>
        <taxon>Thermotogae</taxon>
        <taxon>Thermotogales</taxon>
        <taxon>Thermotogaceae</taxon>
        <taxon>Thermotoga</taxon>
    </lineage>
</organism>
<reference key="1">
    <citation type="journal article" date="2011" name="J. Bacteriol.">
        <title>Genome sequence of Thermotoga sp. strain RQ2, a hyperthermophilic bacterium isolated from a geothermally heated region of the seafloor near Ribeira Quente, the Azores.</title>
        <authorList>
            <person name="Swithers K.S."/>
            <person name="DiPippo J.L."/>
            <person name="Bruce D.C."/>
            <person name="Detter C."/>
            <person name="Tapia R."/>
            <person name="Han S."/>
            <person name="Saunders E."/>
            <person name="Goodwin L.A."/>
            <person name="Han J."/>
            <person name="Woyke T."/>
            <person name="Pitluck S."/>
            <person name="Pennacchio L."/>
            <person name="Nolan M."/>
            <person name="Mikhailova N."/>
            <person name="Lykidis A."/>
            <person name="Land M.L."/>
            <person name="Brettin T."/>
            <person name="Stetter K.O."/>
            <person name="Nelson K.E."/>
            <person name="Gogarten J.P."/>
            <person name="Noll K.M."/>
        </authorList>
    </citation>
    <scope>NUCLEOTIDE SEQUENCE [LARGE SCALE GENOMIC DNA]</scope>
    <source>
        <strain>RQ2</strain>
    </source>
</reference>
<keyword id="KW-0030">Aminoacyl-tRNA synthetase</keyword>
<keyword id="KW-0067">ATP-binding</keyword>
<keyword id="KW-0963">Cytoplasm</keyword>
<keyword id="KW-0436">Ligase</keyword>
<keyword id="KW-0479">Metal-binding</keyword>
<keyword id="KW-0547">Nucleotide-binding</keyword>
<keyword id="KW-0648">Protein biosynthesis</keyword>
<keyword id="KW-0694">RNA-binding</keyword>
<keyword id="KW-0820">tRNA-binding</keyword>
<keyword id="KW-0862">Zinc</keyword>
<feature type="chain" id="PRO_1000098624" description="Threonine--tRNA ligase">
    <location>
        <begin position="1"/>
        <end position="640"/>
    </location>
</feature>
<feature type="domain" description="TGS" evidence="2">
    <location>
        <begin position="1"/>
        <end position="59"/>
    </location>
</feature>
<feature type="region of interest" description="Catalytic" evidence="1">
    <location>
        <begin position="240"/>
        <end position="531"/>
    </location>
</feature>
<feature type="binding site" evidence="1">
    <location>
        <position position="332"/>
    </location>
    <ligand>
        <name>Zn(2+)</name>
        <dbReference type="ChEBI" id="CHEBI:29105"/>
    </ligand>
</feature>
<feature type="binding site" evidence="1">
    <location>
        <position position="383"/>
    </location>
    <ligand>
        <name>Zn(2+)</name>
        <dbReference type="ChEBI" id="CHEBI:29105"/>
    </ligand>
</feature>
<feature type="binding site" evidence="1">
    <location>
        <position position="508"/>
    </location>
    <ligand>
        <name>Zn(2+)</name>
        <dbReference type="ChEBI" id="CHEBI:29105"/>
    </ligand>
</feature>
<comment type="function">
    <text evidence="1">Catalyzes the attachment of threonine to tRNA(Thr) in a two-step reaction: L-threonine is first activated by ATP to form Thr-AMP and then transferred to the acceptor end of tRNA(Thr). Also edits incorrectly charged L-seryl-tRNA(Thr).</text>
</comment>
<comment type="catalytic activity">
    <reaction evidence="1">
        <text>tRNA(Thr) + L-threonine + ATP = L-threonyl-tRNA(Thr) + AMP + diphosphate + H(+)</text>
        <dbReference type="Rhea" id="RHEA:24624"/>
        <dbReference type="Rhea" id="RHEA-COMP:9670"/>
        <dbReference type="Rhea" id="RHEA-COMP:9704"/>
        <dbReference type="ChEBI" id="CHEBI:15378"/>
        <dbReference type="ChEBI" id="CHEBI:30616"/>
        <dbReference type="ChEBI" id="CHEBI:33019"/>
        <dbReference type="ChEBI" id="CHEBI:57926"/>
        <dbReference type="ChEBI" id="CHEBI:78442"/>
        <dbReference type="ChEBI" id="CHEBI:78534"/>
        <dbReference type="ChEBI" id="CHEBI:456215"/>
        <dbReference type="EC" id="6.1.1.3"/>
    </reaction>
</comment>
<comment type="cofactor">
    <cofactor evidence="1">
        <name>Zn(2+)</name>
        <dbReference type="ChEBI" id="CHEBI:29105"/>
    </cofactor>
    <text evidence="1">Binds 1 zinc ion per subunit.</text>
</comment>
<comment type="subunit">
    <text evidence="1">Homodimer.</text>
</comment>
<comment type="subcellular location">
    <subcellularLocation>
        <location evidence="1">Cytoplasm</location>
    </subcellularLocation>
</comment>
<comment type="similarity">
    <text evidence="1">Belongs to the class-II aminoacyl-tRNA synthetase family.</text>
</comment>
<gene>
    <name evidence="1" type="primary">thrS</name>
    <name type="ordered locus">TRQ2_0187</name>
</gene>
<evidence type="ECO:0000255" key="1">
    <source>
        <dbReference type="HAMAP-Rule" id="MF_00184"/>
    </source>
</evidence>
<evidence type="ECO:0000255" key="2">
    <source>
        <dbReference type="PROSITE-ProRule" id="PRU01228"/>
    </source>
</evidence>
<proteinExistence type="inferred from homology"/>